<accession>Q3K0P8</accession>
<dbReference type="EC" id="2.4.2.7" evidence="1"/>
<dbReference type="EMBL" id="CP000114">
    <property type="protein sequence ID" value="ABA45095.1"/>
    <property type="molecule type" value="Genomic_DNA"/>
</dbReference>
<dbReference type="RefSeq" id="WP_000365344.1">
    <property type="nucleotide sequence ID" value="NC_007432.1"/>
</dbReference>
<dbReference type="SMR" id="Q3K0P8"/>
<dbReference type="KEGG" id="sak:SAK_1292"/>
<dbReference type="HOGENOM" id="CLU_063339_3_0_9"/>
<dbReference type="UniPathway" id="UPA00588">
    <property type="reaction ID" value="UER00646"/>
</dbReference>
<dbReference type="GO" id="GO:0005737">
    <property type="term" value="C:cytoplasm"/>
    <property type="evidence" value="ECO:0007669"/>
    <property type="project" value="UniProtKB-SubCell"/>
</dbReference>
<dbReference type="GO" id="GO:0002055">
    <property type="term" value="F:adenine binding"/>
    <property type="evidence" value="ECO:0007669"/>
    <property type="project" value="TreeGrafter"/>
</dbReference>
<dbReference type="GO" id="GO:0003999">
    <property type="term" value="F:adenine phosphoribosyltransferase activity"/>
    <property type="evidence" value="ECO:0007669"/>
    <property type="project" value="UniProtKB-UniRule"/>
</dbReference>
<dbReference type="GO" id="GO:0016208">
    <property type="term" value="F:AMP binding"/>
    <property type="evidence" value="ECO:0007669"/>
    <property type="project" value="TreeGrafter"/>
</dbReference>
<dbReference type="GO" id="GO:0006168">
    <property type="term" value="P:adenine salvage"/>
    <property type="evidence" value="ECO:0007669"/>
    <property type="project" value="InterPro"/>
</dbReference>
<dbReference type="GO" id="GO:0044209">
    <property type="term" value="P:AMP salvage"/>
    <property type="evidence" value="ECO:0007669"/>
    <property type="project" value="UniProtKB-UniRule"/>
</dbReference>
<dbReference type="GO" id="GO:0006166">
    <property type="term" value="P:purine ribonucleoside salvage"/>
    <property type="evidence" value="ECO:0007669"/>
    <property type="project" value="UniProtKB-KW"/>
</dbReference>
<dbReference type="CDD" id="cd06223">
    <property type="entry name" value="PRTases_typeI"/>
    <property type="match status" value="1"/>
</dbReference>
<dbReference type="FunFam" id="3.40.50.2020:FF:000004">
    <property type="entry name" value="Adenine phosphoribosyltransferase"/>
    <property type="match status" value="1"/>
</dbReference>
<dbReference type="Gene3D" id="3.40.50.2020">
    <property type="match status" value="1"/>
</dbReference>
<dbReference type="HAMAP" id="MF_00004">
    <property type="entry name" value="Aden_phosphoribosyltr"/>
    <property type="match status" value="1"/>
</dbReference>
<dbReference type="InterPro" id="IPR005764">
    <property type="entry name" value="Ade_phspho_trans"/>
</dbReference>
<dbReference type="InterPro" id="IPR000836">
    <property type="entry name" value="PRibTrfase_dom"/>
</dbReference>
<dbReference type="InterPro" id="IPR029057">
    <property type="entry name" value="PRTase-like"/>
</dbReference>
<dbReference type="InterPro" id="IPR050054">
    <property type="entry name" value="UPRTase/APRTase"/>
</dbReference>
<dbReference type="NCBIfam" id="TIGR01090">
    <property type="entry name" value="apt"/>
    <property type="match status" value="1"/>
</dbReference>
<dbReference type="NCBIfam" id="NF002633">
    <property type="entry name" value="PRK02304.1-2"/>
    <property type="match status" value="1"/>
</dbReference>
<dbReference type="NCBIfam" id="NF002634">
    <property type="entry name" value="PRK02304.1-3"/>
    <property type="match status" value="1"/>
</dbReference>
<dbReference type="NCBIfam" id="NF002636">
    <property type="entry name" value="PRK02304.1-5"/>
    <property type="match status" value="1"/>
</dbReference>
<dbReference type="PANTHER" id="PTHR32315">
    <property type="entry name" value="ADENINE PHOSPHORIBOSYLTRANSFERASE"/>
    <property type="match status" value="1"/>
</dbReference>
<dbReference type="PANTHER" id="PTHR32315:SF3">
    <property type="entry name" value="ADENINE PHOSPHORIBOSYLTRANSFERASE"/>
    <property type="match status" value="1"/>
</dbReference>
<dbReference type="Pfam" id="PF00156">
    <property type="entry name" value="Pribosyltran"/>
    <property type="match status" value="1"/>
</dbReference>
<dbReference type="SUPFAM" id="SSF53271">
    <property type="entry name" value="PRTase-like"/>
    <property type="match status" value="1"/>
</dbReference>
<dbReference type="PROSITE" id="PS00103">
    <property type="entry name" value="PUR_PYR_PR_TRANSFER"/>
    <property type="match status" value="1"/>
</dbReference>
<organism>
    <name type="scientific">Streptococcus agalactiae serotype Ia (strain ATCC 27591 / A909 / CDC SS700)</name>
    <dbReference type="NCBI Taxonomy" id="205921"/>
    <lineage>
        <taxon>Bacteria</taxon>
        <taxon>Bacillati</taxon>
        <taxon>Bacillota</taxon>
        <taxon>Bacilli</taxon>
        <taxon>Lactobacillales</taxon>
        <taxon>Streptococcaceae</taxon>
        <taxon>Streptococcus</taxon>
    </lineage>
</organism>
<gene>
    <name evidence="1" type="primary">apt</name>
    <name type="ordered locus">SAK_1292</name>
</gene>
<feature type="chain" id="PRO_1000000351" description="Adenine phosphoribosyltransferase">
    <location>
        <begin position="1"/>
        <end position="172"/>
    </location>
</feature>
<proteinExistence type="inferred from homology"/>
<keyword id="KW-0963">Cytoplasm</keyword>
<keyword id="KW-0328">Glycosyltransferase</keyword>
<keyword id="KW-0660">Purine salvage</keyword>
<keyword id="KW-0808">Transferase</keyword>
<protein>
    <recommendedName>
        <fullName evidence="1">Adenine phosphoribosyltransferase</fullName>
        <shortName evidence="1">APRT</shortName>
        <ecNumber evidence="1">2.4.2.7</ecNumber>
    </recommendedName>
</protein>
<reference key="1">
    <citation type="journal article" date="2005" name="Proc. Natl. Acad. Sci. U.S.A.">
        <title>Genome analysis of multiple pathogenic isolates of Streptococcus agalactiae: implications for the microbial 'pan-genome'.</title>
        <authorList>
            <person name="Tettelin H."/>
            <person name="Masignani V."/>
            <person name="Cieslewicz M.J."/>
            <person name="Donati C."/>
            <person name="Medini D."/>
            <person name="Ward N.L."/>
            <person name="Angiuoli S.V."/>
            <person name="Crabtree J."/>
            <person name="Jones A.L."/>
            <person name="Durkin A.S."/>
            <person name="DeBoy R.T."/>
            <person name="Davidsen T.M."/>
            <person name="Mora M."/>
            <person name="Scarselli M."/>
            <person name="Margarit y Ros I."/>
            <person name="Peterson J.D."/>
            <person name="Hauser C.R."/>
            <person name="Sundaram J.P."/>
            <person name="Nelson W.C."/>
            <person name="Madupu R."/>
            <person name="Brinkac L.M."/>
            <person name="Dodson R.J."/>
            <person name="Rosovitz M.J."/>
            <person name="Sullivan S.A."/>
            <person name="Daugherty S.C."/>
            <person name="Haft D.H."/>
            <person name="Selengut J."/>
            <person name="Gwinn M.L."/>
            <person name="Zhou L."/>
            <person name="Zafar N."/>
            <person name="Khouri H."/>
            <person name="Radune D."/>
            <person name="Dimitrov G."/>
            <person name="Watkins K."/>
            <person name="O'Connor K.J."/>
            <person name="Smith S."/>
            <person name="Utterback T.R."/>
            <person name="White O."/>
            <person name="Rubens C.E."/>
            <person name="Grandi G."/>
            <person name="Madoff L.C."/>
            <person name="Kasper D.L."/>
            <person name="Telford J.L."/>
            <person name="Wessels M.R."/>
            <person name="Rappuoli R."/>
            <person name="Fraser C.M."/>
        </authorList>
    </citation>
    <scope>NUCLEOTIDE SEQUENCE [LARGE SCALE GENOMIC DNA]</scope>
    <source>
        <strain>ATCC 27591 / A909 / CDC SS700</strain>
    </source>
</reference>
<comment type="function">
    <text evidence="1">Catalyzes a salvage reaction resulting in the formation of AMP, that is energically less costly than de novo synthesis.</text>
</comment>
<comment type="catalytic activity">
    <reaction evidence="1">
        <text>AMP + diphosphate = 5-phospho-alpha-D-ribose 1-diphosphate + adenine</text>
        <dbReference type="Rhea" id="RHEA:16609"/>
        <dbReference type="ChEBI" id="CHEBI:16708"/>
        <dbReference type="ChEBI" id="CHEBI:33019"/>
        <dbReference type="ChEBI" id="CHEBI:58017"/>
        <dbReference type="ChEBI" id="CHEBI:456215"/>
        <dbReference type="EC" id="2.4.2.7"/>
    </reaction>
</comment>
<comment type="pathway">
    <text evidence="1">Purine metabolism; AMP biosynthesis via salvage pathway; AMP from adenine: step 1/1.</text>
</comment>
<comment type="subunit">
    <text evidence="1">Homodimer.</text>
</comment>
<comment type="subcellular location">
    <subcellularLocation>
        <location evidence="1">Cytoplasm</location>
    </subcellularLocation>
</comment>
<comment type="similarity">
    <text evidence="1">Belongs to the purine/pyrimidine phosphoribosyltransferase family.</text>
</comment>
<evidence type="ECO:0000255" key="1">
    <source>
        <dbReference type="HAMAP-Rule" id="MF_00004"/>
    </source>
</evidence>
<sequence>MDLNNYIASIENYPQEGITFRDISPLMADGKAYSYAVREIVQYAADKDIDMIVGPEARGFIVGCPVAYALGIGFAPVRKPGKLPREVISANYEKEYGLDTLTMHADAIKPGQRVLIVDDLLATGGTVKATIEMIEKLGGVVAGCAFLVELDGLNGRKAIEGYDTKVLMNFPG</sequence>
<name>APT_STRA1</name>